<gene>
    <name type="primary">OPG091</name>
    <name type="ORF">G6R</name>
</gene>
<proteinExistence type="inferred from homology"/>
<feature type="chain" id="PRO_0000099534" description="Protein OPG091">
    <location>
        <begin position="1"/>
        <end position="165"/>
    </location>
</feature>
<accession>P21027</accession>
<dbReference type="EMBL" id="M35027">
    <property type="protein sequence ID" value="AAA48070.1"/>
    <property type="molecule type" value="Genomic_DNA"/>
</dbReference>
<dbReference type="PIR" id="B42512">
    <property type="entry name" value="B42512"/>
</dbReference>
<dbReference type="SMR" id="P21027"/>
<dbReference type="Proteomes" id="UP000008269">
    <property type="component" value="Segment"/>
</dbReference>
<dbReference type="GO" id="GO:0030430">
    <property type="term" value="C:host cell cytoplasm"/>
    <property type="evidence" value="ECO:0007669"/>
    <property type="project" value="UniProtKB-SubCell"/>
</dbReference>
<dbReference type="GO" id="GO:0044423">
    <property type="term" value="C:virion component"/>
    <property type="evidence" value="ECO:0007669"/>
    <property type="project" value="UniProtKB-KW"/>
</dbReference>
<dbReference type="Gene3D" id="3.90.1720.10">
    <property type="entry name" value="endopeptidase domain like (from Nostoc punctiforme)"/>
    <property type="match status" value="1"/>
</dbReference>
<dbReference type="InterPro" id="IPR038765">
    <property type="entry name" value="Papain-like_cys_pep_sf"/>
</dbReference>
<dbReference type="InterPro" id="IPR024453">
    <property type="entry name" value="Peptidase_C92"/>
</dbReference>
<dbReference type="Pfam" id="PF05708">
    <property type="entry name" value="Peptidase_C92"/>
    <property type="match status" value="1"/>
</dbReference>
<dbReference type="SUPFAM" id="SSF54001">
    <property type="entry name" value="Cysteine proteinases"/>
    <property type="match status" value="1"/>
</dbReference>
<keyword id="KW-1035">Host cytoplasm</keyword>
<keyword id="KW-0426">Late protein</keyword>
<keyword id="KW-1185">Reference proteome</keyword>
<keyword id="KW-0946">Virion</keyword>
<comment type="function">
    <text evidence="1">Contributes to vaccinia virus virulence in mice but not to replication in cell culture.</text>
</comment>
<comment type="subcellular location">
    <subcellularLocation>
        <location evidence="1">Virion</location>
    </subcellularLocation>
    <subcellularLocation>
        <location evidence="1">Host cytoplasm</location>
    </subcellularLocation>
    <text evidence="1">Localized to the interior of virions, primarily between the membrane and core.</text>
</comment>
<comment type="miscellaneous">
    <text evidence="1">Displays sequence similarity with a group of bacterial permuted NlpC/P60 proteins. Thus, the ancestor of the OPG091 gene might have been acquired from a bacterial source at the onset of poxvirus evolution.</text>
</comment>
<comment type="similarity">
    <text evidence="2">Belongs to the orthopoxvirus OPG091 family.</text>
</comment>
<protein>
    <recommendedName>
        <fullName>Protein OPG091</fullName>
    </recommendedName>
    <alternativeName>
        <fullName>Uncharacterized protein G6</fullName>
    </alternativeName>
</protein>
<evidence type="ECO:0000250" key="1">
    <source>
        <dbReference type="UniProtKB" id="Q80HW9"/>
    </source>
</evidence>
<evidence type="ECO:0000305" key="2"/>
<reference key="1">
    <citation type="journal article" date="1990" name="Virology">
        <title>The complete DNA sequence of vaccinia virus.</title>
        <authorList>
            <person name="Goebel S.J."/>
            <person name="Johnson G.P."/>
            <person name="Perkus M.E."/>
            <person name="Davis S.W."/>
            <person name="Winslow J.P."/>
            <person name="Paoletti E."/>
        </authorList>
    </citation>
    <scope>NUCLEOTIDE SEQUENCE [LARGE SCALE GENOMIC DNA]</scope>
</reference>
<reference key="2">
    <citation type="journal article" date="1990" name="Virology">
        <title>Appendix to 'The complete DNA sequence of vaccinia virus'.</title>
        <authorList>
            <person name="Goebel S.J."/>
            <person name="Johnson G.P."/>
            <person name="Perkus M.E."/>
            <person name="Davis S.W."/>
            <person name="Winslow J.P."/>
            <person name="Paoletti E."/>
        </authorList>
    </citation>
    <scope>NUCLEOTIDE SEQUENCE [LARGE SCALE GENOMIC DNA]</scope>
</reference>
<organismHost>
    <name type="scientific">Homo sapiens</name>
    <name type="common">Human</name>
    <dbReference type="NCBI Taxonomy" id="9606"/>
</organismHost>
<sequence>MDPVNFIKTYAPRGSIIFINYTMSLTSHLNPSIEKHVGIYYGTLLSEHLVVESTYRKGVRIVPLDSFFEGYLSAKVYMLENIQVMKIAADTSLTLLGIPYGFGHNRMYCFKLVADCYKNAGVETSSKRILGKDIFLSQNFTDDNRWIKIYDSNNLTFWQIDYLKG</sequence>
<organism>
    <name type="scientific">Vaccinia virus (strain Copenhagen)</name>
    <name type="common">VACV</name>
    <dbReference type="NCBI Taxonomy" id="10249"/>
    <lineage>
        <taxon>Viruses</taxon>
        <taxon>Varidnaviria</taxon>
        <taxon>Bamfordvirae</taxon>
        <taxon>Nucleocytoviricota</taxon>
        <taxon>Pokkesviricetes</taxon>
        <taxon>Chitovirales</taxon>
        <taxon>Poxviridae</taxon>
        <taxon>Chordopoxvirinae</taxon>
        <taxon>Orthopoxvirus</taxon>
        <taxon>Vaccinia virus</taxon>
    </lineage>
</organism>
<name>PG091_VACCC</name>